<sequence length="230" mass="25960">MVKLVFARHGESEWNKANLFTGWADVDLSEKGTQQAIDAGKLIQAAGIEFDLAFTSVLKRAIKTTNLALEAADQLWVPVEKSWRLNERHYGGLTGKNKAEAAEQFGDEQVHIWRRSYDVLPPDMAKDDEHSAHTDRRYASLDDSVIPDAENLKVTLERALPFWEDKIAPALKDGKNVFVGAHGNSIRALVKHIKQLSDDEIMDVEIPNFPPLVFEFDEKLNLVSEYYLGK</sequence>
<proteinExistence type="inferred from homology"/>
<protein>
    <recommendedName>
        <fullName evidence="1">2,3-bisphosphoglycerate-dependent phosphoglycerate mutase</fullName>
        <shortName evidence="1">BPG-dependent PGAM</shortName>
        <shortName evidence="1">PGAM</shortName>
        <shortName evidence="1">Phosphoglyceromutase</shortName>
        <shortName evidence="1">dPGM</shortName>
        <ecNumber evidence="1">5.4.2.11</ecNumber>
    </recommendedName>
</protein>
<evidence type="ECO:0000255" key="1">
    <source>
        <dbReference type="HAMAP-Rule" id="MF_01039"/>
    </source>
</evidence>
<comment type="function">
    <text evidence="1">Catalyzes the interconversion of 2-phosphoglycerate and 3-phosphoglycerate.</text>
</comment>
<comment type="catalytic activity">
    <reaction evidence="1">
        <text>(2R)-2-phosphoglycerate = (2R)-3-phosphoglycerate</text>
        <dbReference type="Rhea" id="RHEA:15901"/>
        <dbReference type="ChEBI" id="CHEBI:58272"/>
        <dbReference type="ChEBI" id="CHEBI:58289"/>
        <dbReference type="EC" id="5.4.2.11"/>
    </reaction>
</comment>
<comment type="pathway">
    <text evidence="1">Carbohydrate degradation; glycolysis; pyruvate from D-glyceraldehyde 3-phosphate: step 3/5.</text>
</comment>
<comment type="similarity">
    <text evidence="1">Belongs to the phosphoglycerate mutase family. BPG-dependent PGAM subfamily.</text>
</comment>
<organism>
    <name type="scientific">Streptococcus agalactiae serotype Ia (strain ATCC 27591 / A909 / CDC SS700)</name>
    <dbReference type="NCBI Taxonomy" id="205921"/>
    <lineage>
        <taxon>Bacteria</taxon>
        <taxon>Bacillati</taxon>
        <taxon>Bacillota</taxon>
        <taxon>Bacilli</taxon>
        <taxon>Lactobacillales</taxon>
        <taxon>Streptococcaceae</taxon>
        <taxon>Streptococcus</taxon>
    </lineage>
</organism>
<accession>Q3K1U2</accession>
<dbReference type="EC" id="5.4.2.11" evidence="1"/>
<dbReference type="EMBL" id="CP000114">
    <property type="protein sequence ID" value="ABA45352.1"/>
    <property type="molecule type" value="Genomic_DNA"/>
</dbReference>
<dbReference type="RefSeq" id="WP_000240135.1">
    <property type="nucleotide sequence ID" value="NC_007432.1"/>
</dbReference>
<dbReference type="SMR" id="Q3K1U2"/>
<dbReference type="KEGG" id="sak:SAK_0889"/>
<dbReference type="HOGENOM" id="CLU_033323_1_5_9"/>
<dbReference type="UniPathway" id="UPA00109">
    <property type="reaction ID" value="UER00186"/>
</dbReference>
<dbReference type="GO" id="GO:0004619">
    <property type="term" value="F:phosphoglycerate mutase activity"/>
    <property type="evidence" value="ECO:0007669"/>
    <property type="project" value="UniProtKB-EC"/>
</dbReference>
<dbReference type="GO" id="GO:0006094">
    <property type="term" value="P:gluconeogenesis"/>
    <property type="evidence" value="ECO:0007669"/>
    <property type="project" value="UniProtKB-UniRule"/>
</dbReference>
<dbReference type="GO" id="GO:0006096">
    <property type="term" value="P:glycolytic process"/>
    <property type="evidence" value="ECO:0007669"/>
    <property type="project" value="UniProtKB-UniRule"/>
</dbReference>
<dbReference type="CDD" id="cd07067">
    <property type="entry name" value="HP_PGM_like"/>
    <property type="match status" value="1"/>
</dbReference>
<dbReference type="FunFam" id="3.40.50.1240:FF:000003">
    <property type="entry name" value="2,3-bisphosphoglycerate-dependent phosphoglycerate mutase"/>
    <property type="match status" value="1"/>
</dbReference>
<dbReference type="Gene3D" id="3.40.50.1240">
    <property type="entry name" value="Phosphoglycerate mutase-like"/>
    <property type="match status" value="1"/>
</dbReference>
<dbReference type="HAMAP" id="MF_01039">
    <property type="entry name" value="PGAM_GpmA"/>
    <property type="match status" value="1"/>
</dbReference>
<dbReference type="InterPro" id="IPR013078">
    <property type="entry name" value="His_Pase_superF_clade-1"/>
</dbReference>
<dbReference type="InterPro" id="IPR029033">
    <property type="entry name" value="His_PPase_superfam"/>
</dbReference>
<dbReference type="InterPro" id="IPR005952">
    <property type="entry name" value="Phosphogly_mut1"/>
</dbReference>
<dbReference type="NCBIfam" id="TIGR01258">
    <property type="entry name" value="pgm_1"/>
    <property type="match status" value="1"/>
</dbReference>
<dbReference type="NCBIfam" id="NF010713">
    <property type="entry name" value="PRK14115.1"/>
    <property type="match status" value="1"/>
</dbReference>
<dbReference type="NCBIfam" id="NF010715">
    <property type="entry name" value="PRK14117.1"/>
    <property type="match status" value="1"/>
</dbReference>
<dbReference type="PANTHER" id="PTHR11931">
    <property type="entry name" value="PHOSPHOGLYCERATE MUTASE"/>
    <property type="match status" value="1"/>
</dbReference>
<dbReference type="Pfam" id="PF00300">
    <property type="entry name" value="His_Phos_1"/>
    <property type="match status" value="1"/>
</dbReference>
<dbReference type="PIRSF" id="PIRSF000709">
    <property type="entry name" value="6PFK_2-Ptase"/>
    <property type="match status" value="1"/>
</dbReference>
<dbReference type="SMART" id="SM00855">
    <property type="entry name" value="PGAM"/>
    <property type="match status" value="1"/>
</dbReference>
<dbReference type="SUPFAM" id="SSF53254">
    <property type="entry name" value="Phosphoglycerate mutase-like"/>
    <property type="match status" value="1"/>
</dbReference>
<feature type="chain" id="PRO_0000229144" description="2,3-bisphosphoglycerate-dependent phosphoglycerate mutase">
    <location>
        <begin position="1"/>
        <end position="230"/>
    </location>
</feature>
<feature type="active site" description="Tele-phosphohistidine intermediate" evidence="1">
    <location>
        <position position="9"/>
    </location>
</feature>
<feature type="active site" description="Proton donor/acceptor" evidence="1">
    <location>
        <position position="87"/>
    </location>
</feature>
<feature type="binding site" evidence="1">
    <location>
        <begin position="8"/>
        <end position="15"/>
    </location>
    <ligand>
        <name>substrate</name>
    </ligand>
</feature>
<feature type="binding site" evidence="1">
    <location>
        <begin position="21"/>
        <end position="22"/>
    </location>
    <ligand>
        <name>substrate</name>
    </ligand>
</feature>
<feature type="binding site" evidence="1">
    <location>
        <position position="60"/>
    </location>
    <ligand>
        <name>substrate</name>
    </ligand>
</feature>
<feature type="binding site" evidence="1">
    <location>
        <begin position="87"/>
        <end position="90"/>
    </location>
    <ligand>
        <name>substrate</name>
    </ligand>
</feature>
<feature type="binding site" evidence="1">
    <location>
        <position position="98"/>
    </location>
    <ligand>
        <name>substrate</name>
    </ligand>
</feature>
<feature type="binding site" evidence="1">
    <location>
        <begin position="114"/>
        <end position="115"/>
    </location>
    <ligand>
        <name>substrate</name>
    </ligand>
</feature>
<feature type="binding site" evidence="1">
    <location>
        <begin position="183"/>
        <end position="184"/>
    </location>
    <ligand>
        <name>substrate</name>
    </ligand>
</feature>
<feature type="site" description="Transition state stabilizer" evidence="1">
    <location>
        <position position="182"/>
    </location>
</feature>
<reference key="1">
    <citation type="journal article" date="2005" name="Proc. Natl. Acad. Sci. U.S.A.">
        <title>Genome analysis of multiple pathogenic isolates of Streptococcus agalactiae: implications for the microbial 'pan-genome'.</title>
        <authorList>
            <person name="Tettelin H."/>
            <person name="Masignani V."/>
            <person name="Cieslewicz M.J."/>
            <person name="Donati C."/>
            <person name="Medini D."/>
            <person name="Ward N.L."/>
            <person name="Angiuoli S.V."/>
            <person name="Crabtree J."/>
            <person name="Jones A.L."/>
            <person name="Durkin A.S."/>
            <person name="DeBoy R.T."/>
            <person name="Davidsen T.M."/>
            <person name="Mora M."/>
            <person name="Scarselli M."/>
            <person name="Margarit y Ros I."/>
            <person name="Peterson J.D."/>
            <person name="Hauser C.R."/>
            <person name="Sundaram J.P."/>
            <person name="Nelson W.C."/>
            <person name="Madupu R."/>
            <person name="Brinkac L.M."/>
            <person name="Dodson R.J."/>
            <person name="Rosovitz M.J."/>
            <person name="Sullivan S.A."/>
            <person name="Daugherty S.C."/>
            <person name="Haft D.H."/>
            <person name="Selengut J."/>
            <person name="Gwinn M.L."/>
            <person name="Zhou L."/>
            <person name="Zafar N."/>
            <person name="Khouri H."/>
            <person name="Radune D."/>
            <person name="Dimitrov G."/>
            <person name="Watkins K."/>
            <person name="O'Connor K.J."/>
            <person name="Smith S."/>
            <person name="Utterback T.R."/>
            <person name="White O."/>
            <person name="Rubens C.E."/>
            <person name="Grandi G."/>
            <person name="Madoff L.C."/>
            <person name="Kasper D.L."/>
            <person name="Telford J.L."/>
            <person name="Wessels M.R."/>
            <person name="Rappuoli R."/>
            <person name="Fraser C.M."/>
        </authorList>
    </citation>
    <scope>NUCLEOTIDE SEQUENCE [LARGE SCALE GENOMIC DNA]</scope>
    <source>
        <strain>ATCC 27591 / A909 / CDC SS700</strain>
    </source>
</reference>
<name>GPMA_STRA1</name>
<keyword id="KW-0312">Gluconeogenesis</keyword>
<keyword id="KW-0324">Glycolysis</keyword>
<keyword id="KW-0413">Isomerase</keyword>
<gene>
    <name evidence="1" type="primary">gpmA</name>
    <name type="ordered locus">SAK_0889</name>
</gene>